<name>LPXD_TRIEI</name>
<keyword id="KW-0012">Acyltransferase</keyword>
<keyword id="KW-0441">Lipid A biosynthesis</keyword>
<keyword id="KW-0444">Lipid biosynthesis</keyword>
<keyword id="KW-0443">Lipid metabolism</keyword>
<keyword id="KW-0677">Repeat</keyword>
<keyword id="KW-0808">Transferase</keyword>
<proteinExistence type="inferred from homology"/>
<gene>
    <name evidence="1" type="primary">lpxD</name>
    <name type="ordered locus">Tery_4825</name>
</gene>
<organism>
    <name type="scientific">Trichodesmium erythraeum (strain IMS101)</name>
    <dbReference type="NCBI Taxonomy" id="203124"/>
    <lineage>
        <taxon>Bacteria</taxon>
        <taxon>Bacillati</taxon>
        <taxon>Cyanobacteriota</taxon>
        <taxon>Cyanophyceae</taxon>
        <taxon>Oscillatoriophycideae</taxon>
        <taxon>Oscillatoriales</taxon>
        <taxon>Microcoleaceae</taxon>
        <taxon>Trichodesmium</taxon>
    </lineage>
</organism>
<protein>
    <recommendedName>
        <fullName evidence="1">UDP-3-O-acylglucosamine N-acyltransferase</fullName>
        <ecNumber evidence="1">2.3.1.191</ecNumber>
    </recommendedName>
</protein>
<dbReference type="EC" id="2.3.1.191" evidence="1"/>
<dbReference type="EMBL" id="CP000393">
    <property type="protein sequence ID" value="ABG53769.1"/>
    <property type="molecule type" value="Genomic_DNA"/>
</dbReference>
<dbReference type="RefSeq" id="WP_011614083.1">
    <property type="nucleotide sequence ID" value="NC_008312.1"/>
</dbReference>
<dbReference type="SMR" id="Q10VF5"/>
<dbReference type="STRING" id="203124.Tery_4825"/>
<dbReference type="KEGG" id="ter:Tery_4825"/>
<dbReference type="eggNOG" id="COG1044">
    <property type="taxonomic scope" value="Bacteria"/>
</dbReference>
<dbReference type="HOGENOM" id="CLU_049865_0_0_3"/>
<dbReference type="OrthoDB" id="9784739at2"/>
<dbReference type="UniPathway" id="UPA00973"/>
<dbReference type="GO" id="GO:0031470">
    <property type="term" value="C:carboxysome"/>
    <property type="evidence" value="ECO:0007669"/>
    <property type="project" value="UniProtKB-ARBA"/>
</dbReference>
<dbReference type="GO" id="GO:0016020">
    <property type="term" value="C:membrane"/>
    <property type="evidence" value="ECO:0007669"/>
    <property type="project" value="GOC"/>
</dbReference>
<dbReference type="GO" id="GO:0016410">
    <property type="term" value="F:N-acyltransferase activity"/>
    <property type="evidence" value="ECO:0007669"/>
    <property type="project" value="InterPro"/>
</dbReference>
<dbReference type="GO" id="GO:0043886">
    <property type="term" value="F:structural constituent of carboxysome shell"/>
    <property type="evidence" value="ECO:0007669"/>
    <property type="project" value="UniProtKB-ARBA"/>
</dbReference>
<dbReference type="GO" id="GO:0009245">
    <property type="term" value="P:lipid A biosynthetic process"/>
    <property type="evidence" value="ECO:0007669"/>
    <property type="project" value="UniProtKB-UniRule"/>
</dbReference>
<dbReference type="CDD" id="cd03352">
    <property type="entry name" value="LbH_LpxD"/>
    <property type="match status" value="1"/>
</dbReference>
<dbReference type="Gene3D" id="2.160.10.10">
    <property type="entry name" value="Hexapeptide repeat proteins"/>
    <property type="match status" value="1"/>
</dbReference>
<dbReference type="Gene3D" id="3.40.1390.10">
    <property type="entry name" value="MurE/MurF, N-terminal domain"/>
    <property type="match status" value="1"/>
</dbReference>
<dbReference type="HAMAP" id="MF_00523">
    <property type="entry name" value="LpxD"/>
    <property type="match status" value="1"/>
</dbReference>
<dbReference type="InterPro" id="IPR001451">
    <property type="entry name" value="Hexapep"/>
</dbReference>
<dbReference type="InterPro" id="IPR018357">
    <property type="entry name" value="Hexapep_transf_CS"/>
</dbReference>
<dbReference type="InterPro" id="IPR007691">
    <property type="entry name" value="LpxD"/>
</dbReference>
<dbReference type="InterPro" id="IPR011004">
    <property type="entry name" value="Trimer_LpxA-like_sf"/>
</dbReference>
<dbReference type="InterPro" id="IPR020573">
    <property type="entry name" value="UDP_GlcNAc_AcTrfase_non-rep"/>
</dbReference>
<dbReference type="NCBIfam" id="TIGR01853">
    <property type="entry name" value="lipid_A_lpxD"/>
    <property type="match status" value="1"/>
</dbReference>
<dbReference type="NCBIfam" id="NF002060">
    <property type="entry name" value="PRK00892.1"/>
    <property type="match status" value="1"/>
</dbReference>
<dbReference type="PANTHER" id="PTHR43378">
    <property type="entry name" value="UDP-3-O-ACYLGLUCOSAMINE N-ACYLTRANSFERASE"/>
    <property type="match status" value="1"/>
</dbReference>
<dbReference type="PANTHER" id="PTHR43378:SF2">
    <property type="entry name" value="UDP-3-O-ACYLGLUCOSAMINE N-ACYLTRANSFERASE 1, MITOCHONDRIAL-RELATED"/>
    <property type="match status" value="1"/>
</dbReference>
<dbReference type="Pfam" id="PF00132">
    <property type="entry name" value="Hexapep"/>
    <property type="match status" value="3"/>
</dbReference>
<dbReference type="Pfam" id="PF04613">
    <property type="entry name" value="LpxD"/>
    <property type="match status" value="1"/>
</dbReference>
<dbReference type="SUPFAM" id="SSF51161">
    <property type="entry name" value="Trimeric LpxA-like enzymes"/>
    <property type="match status" value="1"/>
</dbReference>
<dbReference type="PROSITE" id="PS00101">
    <property type="entry name" value="HEXAPEP_TRANSFERASES"/>
    <property type="match status" value="1"/>
</dbReference>
<feature type="chain" id="PRO_0000264454" description="UDP-3-O-acylglucosamine N-acyltransferase">
    <location>
        <begin position="1"/>
        <end position="345"/>
    </location>
</feature>
<feature type="active site" description="Proton acceptor" evidence="1">
    <location>
        <position position="248"/>
    </location>
</feature>
<reference key="1">
    <citation type="journal article" date="2015" name="Proc. Natl. Acad. Sci. U.S.A.">
        <title>Trichodesmium genome maintains abundant, widespread noncoding DNA in situ, despite oligotrophic lifestyle.</title>
        <authorList>
            <person name="Walworth N."/>
            <person name="Pfreundt U."/>
            <person name="Nelson W.C."/>
            <person name="Mincer T."/>
            <person name="Heidelberg J.F."/>
            <person name="Fu F."/>
            <person name="Waterbury J.B."/>
            <person name="Glavina del Rio T."/>
            <person name="Goodwin L."/>
            <person name="Kyrpides N.C."/>
            <person name="Land M.L."/>
            <person name="Woyke T."/>
            <person name="Hutchins D.A."/>
            <person name="Hess W.R."/>
            <person name="Webb E.A."/>
        </authorList>
    </citation>
    <scope>NUCLEOTIDE SEQUENCE [LARGE SCALE GENOMIC DNA]</scope>
    <source>
        <strain>IMS101</strain>
    </source>
</reference>
<comment type="function">
    <text evidence="1">Catalyzes the N-acylation of UDP-3-O-acylglucosamine using 3-hydroxyacyl-ACP as the acyl donor. Is involved in the biosynthesis of lipid A, a phosphorylated glycolipid that anchors the lipopolysaccharide to the outer membrane of the cell.</text>
</comment>
<comment type="catalytic activity">
    <reaction evidence="1">
        <text>a UDP-3-O-[(3R)-3-hydroxyacyl]-alpha-D-glucosamine + a (3R)-hydroxyacyl-[ACP] = a UDP-2-N,3-O-bis[(3R)-3-hydroxyacyl]-alpha-D-glucosamine + holo-[ACP] + H(+)</text>
        <dbReference type="Rhea" id="RHEA:53836"/>
        <dbReference type="Rhea" id="RHEA-COMP:9685"/>
        <dbReference type="Rhea" id="RHEA-COMP:9945"/>
        <dbReference type="ChEBI" id="CHEBI:15378"/>
        <dbReference type="ChEBI" id="CHEBI:64479"/>
        <dbReference type="ChEBI" id="CHEBI:78827"/>
        <dbReference type="ChEBI" id="CHEBI:137740"/>
        <dbReference type="ChEBI" id="CHEBI:137748"/>
        <dbReference type="EC" id="2.3.1.191"/>
    </reaction>
</comment>
<comment type="pathway">
    <text evidence="1">Bacterial outer membrane biogenesis; LPS lipid A biosynthesis.</text>
</comment>
<comment type="subunit">
    <text evidence="1">Homotrimer.</text>
</comment>
<comment type="similarity">
    <text evidence="1">Belongs to the transferase hexapeptide repeat family. LpxD subfamily.</text>
</comment>
<evidence type="ECO:0000255" key="1">
    <source>
        <dbReference type="HAMAP-Rule" id="MF_00523"/>
    </source>
</evidence>
<sequence length="345" mass="36590">MKFSKLASKLGSETITCSLEKINHLDPDIQGVAAIDEAKPGTLSYIEGAKFANYLKTTNASALILPMDETLQKLAGERGIGWLSSKEPRLLFAQAIALFYRPFQPTPEIHATSIVHPTAKVGKNVYLGAHVVVEAGVKIGDNVCIYPNVVIYPNVEIGENTILNANCSIHERSQIGKGCVIHSGAVIGGEGFGFVPTPEGWFKMEQSGKVILEDGVEVGGNTTIDRPAVGETRIGKNTKLDNLVQIGHGCKIGKNCALAAQVGLAGGVKLGDNVILAGQVGVANQAKIGDRAIATAQAGVHNDVAAGEIVSSSPAVPNKIYLKASAIYKRLPEIYQFVKQMKRKL</sequence>
<accession>Q10VF5</accession>